<organism>
    <name type="scientific">Finegoldia magna (strain ATCC 29328 / DSM 20472 / WAL 2508)</name>
    <name type="common">Peptostreptococcus magnus</name>
    <dbReference type="NCBI Taxonomy" id="334413"/>
    <lineage>
        <taxon>Bacteria</taxon>
        <taxon>Bacillati</taxon>
        <taxon>Bacillota</taxon>
        <taxon>Tissierellia</taxon>
        <taxon>Tissierellales</taxon>
        <taxon>Peptoniphilaceae</taxon>
        <taxon>Finegoldia</taxon>
    </lineage>
</organism>
<comment type="function">
    <text evidence="1">Together with the chaperonin GroEL, plays an essential role in assisting protein folding. The GroEL-GroES system forms a nano-cage that allows encapsulation of the non-native substrate proteins and provides a physical environment optimized to promote and accelerate protein folding. GroES binds to the apical surface of the GroEL ring, thereby capping the opening of the GroEL channel.</text>
</comment>
<comment type="subunit">
    <text evidence="1">Heptamer of 7 subunits arranged in a ring. Interacts with the chaperonin GroEL.</text>
</comment>
<comment type="subcellular location">
    <subcellularLocation>
        <location evidence="1">Cytoplasm</location>
    </subcellularLocation>
</comment>
<comment type="similarity">
    <text evidence="1">Belongs to the GroES chaperonin family.</text>
</comment>
<sequence>MNLKPIGDRLVLKKQEKEEEKTFSGIVLPSSAKEAPVYAEVLAIGSEVEEDEKMKGNIKVGDKVIYSKYAGTEIKLEDTDYILVKYEDILAVVE</sequence>
<protein>
    <recommendedName>
        <fullName evidence="1">Co-chaperonin GroES</fullName>
    </recommendedName>
    <alternativeName>
        <fullName evidence="1">10 kDa chaperonin</fullName>
    </alternativeName>
    <alternativeName>
        <fullName evidence="1">Chaperonin-10</fullName>
        <shortName evidence="1">Cpn10</shortName>
    </alternativeName>
</protein>
<name>CH10_FINM2</name>
<accession>B0S1R5</accession>
<reference key="1">
    <citation type="journal article" date="2008" name="DNA Res.">
        <title>Complete genome sequence of Finegoldia magna, an anaerobic opportunistic pathogen.</title>
        <authorList>
            <person name="Goto T."/>
            <person name="Yamashita A."/>
            <person name="Hirakawa H."/>
            <person name="Matsutani M."/>
            <person name="Todo K."/>
            <person name="Ohshima K."/>
            <person name="Toh H."/>
            <person name="Miyamoto K."/>
            <person name="Kuhara S."/>
            <person name="Hattori M."/>
            <person name="Shimizu T."/>
            <person name="Akimoto S."/>
        </authorList>
    </citation>
    <scope>NUCLEOTIDE SEQUENCE [LARGE SCALE GENOMIC DNA]</scope>
    <source>
        <strain>ATCC 29328 / DSM 20472 / WAL 2508</strain>
    </source>
</reference>
<keyword id="KW-0143">Chaperone</keyword>
<keyword id="KW-0963">Cytoplasm</keyword>
<keyword id="KW-1185">Reference proteome</keyword>
<keyword id="KW-0346">Stress response</keyword>
<dbReference type="EMBL" id="AP008971">
    <property type="protein sequence ID" value="BAG08305.1"/>
    <property type="molecule type" value="Genomic_DNA"/>
</dbReference>
<dbReference type="RefSeq" id="WP_002839153.1">
    <property type="nucleotide sequence ID" value="NC_010376.1"/>
</dbReference>
<dbReference type="SMR" id="B0S1R5"/>
<dbReference type="STRING" id="334413.FMG_0887"/>
<dbReference type="KEGG" id="fma:FMG_0887"/>
<dbReference type="eggNOG" id="COG0234">
    <property type="taxonomic scope" value="Bacteria"/>
</dbReference>
<dbReference type="HOGENOM" id="CLU_132825_2_0_9"/>
<dbReference type="Proteomes" id="UP000001319">
    <property type="component" value="Chromosome"/>
</dbReference>
<dbReference type="GO" id="GO:0005737">
    <property type="term" value="C:cytoplasm"/>
    <property type="evidence" value="ECO:0007669"/>
    <property type="project" value="UniProtKB-SubCell"/>
</dbReference>
<dbReference type="GO" id="GO:0005524">
    <property type="term" value="F:ATP binding"/>
    <property type="evidence" value="ECO:0007669"/>
    <property type="project" value="InterPro"/>
</dbReference>
<dbReference type="GO" id="GO:0046872">
    <property type="term" value="F:metal ion binding"/>
    <property type="evidence" value="ECO:0007669"/>
    <property type="project" value="TreeGrafter"/>
</dbReference>
<dbReference type="GO" id="GO:0044183">
    <property type="term" value="F:protein folding chaperone"/>
    <property type="evidence" value="ECO:0007669"/>
    <property type="project" value="InterPro"/>
</dbReference>
<dbReference type="GO" id="GO:0051087">
    <property type="term" value="F:protein-folding chaperone binding"/>
    <property type="evidence" value="ECO:0007669"/>
    <property type="project" value="TreeGrafter"/>
</dbReference>
<dbReference type="GO" id="GO:0051082">
    <property type="term" value="F:unfolded protein binding"/>
    <property type="evidence" value="ECO:0007669"/>
    <property type="project" value="TreeGrafter"/>
</dbReference>
<dbReference type="GO" id="GO:0051085">
    <property type="term" value="P:chaperone cofactor-dependent protein refolding"/>
    <property type="evidence" value="ECO:0007669"/>
    <property type="project" value="TreeGrafter"/>
</dbReference>
<dbReference type="CDD" id="cd00320">
    <property type="entry name" value="cpn10"/>
    <property type="match status" value="1"/>
</dbReference>
<dbReference type="FunFam" id="2.30.33.40:FF:000001">
    <property type="entry name" value="10 kDa chaperonin"/>
    <property type="match status" value="1"/>
</dbReference>
<dbReference type="Gene3D" id="2.30.33.40">
    <property type="entry name" value="GroES chaperonin"/>
    <property type="match status" value="1"/>
</dbReference>
<dbReference type="HAMAP" id="MF_00580">
    <property type="entry name" value="CH10"/>
    <property type="match status" value="1"/>
</dbReference>
<dbReference type="InterPro" id="IPR020818">
    <property type="entry name" value="Chaperonin_GroES"/>
</dbReference>
<dbReference type="InterPro" id="IPR037124">
    <property type="entry name" value="Chaperonin_GroES_sf"/>
</dbReference>
<dbReference type="InterPro" id="IPR011032">
    <property type="entry name" value="GroES-like_sf"/>
</dbReference>
<dbReference type="NCBIfam" id="NF001531">
    <property type="entry name" value="PRK00364.2-2"/>
    <property type="match status" value="1"/>
</dbReference>
<dbReference type="PANTHER" id="PTHR10772">
    <property type="entry name" value="10 KDA HEAT SHOCK PROTEIN"/>
    <property type="match status" value="1"/>
</dbReference>
<dbReference type="PANTHER" id="PTHR10772:SF63">
    <property type="entry name" value="20 KDA CHAPERONIN, CHLOROPLASTIC"/>
    <property type="match status" value="1"/>
</dbReference>
<dbReference type="Pfam" id="PF00166">
    <property type="entry name" value="Cpn10"/>
    <property type="match status" value="1"/>
</dbReference>
<dbReference type="PRINTS" id="PR00297">
    <property type="entry name" value="CHAPERONIN10"/>
</dbReference>
<dbReference type="SMART" id="SM00883">
    <property type="entry name" value="Cpn10"/>
    <property type="match status" value="1"/>
</dbReference>
<dbReference type="SUPFAM" id="SSF50129">
    <property type="entry name" value="GroES-like"/>
    <property type="match status" value="1"/>
</dbReference>
<proteinExistence type="inferred from homology"/>
<feature type="chain" id="PRO_1000129663" description="Co-chaperonin GroES">
    <location>
        <begin position="1"/>
        <end position="94"/>
    </location>
</feature>
<evidence type="ECO:0000255" key="1">
    <source>
        <dbReference type="HAMAP-Rule" id="MF_00580"/>
    </source>
</evidence>
<gene>
    <name evidence="1" type="primary">groES</name>
    <name evidence="1" type="synonym">groS</name>
    <name type="ordered locus">FMG_0887</name>
</gene>